<sequence>MNRLLICQNITKHYQEGSLQTQVLKEVSFSMQEGELIAIVGSSGSGKSTLLHMLGGLDQPTSGEVFIHGQSLQRATQDELAKLRNQYLGFVYQFHHLMADFTALENVMMPMLISHKNKTEAKDRAENILSAVGLAKRILHKPSALSGGERQRVAIARSLVNNPKLVLADEPTGNLDHKTTESIFELIQKLNQEQKIAFLLVTHDLQLAEKLGRRLVMQDGILRESNS</sequence>
<reference key="1">
    <citation type="journal article" date="2007" name="J. Bacteriol.">
        <title>Complete genome sequence of Haemophilus somnus (Histophilus somni) strain 129Pt and comparison to Haemophilus ducreyi 35000HP and Haemophilus influenzae Rd.</title>
        <authorList>
            <person name="Challacombe J.F."/>
            <person name="Duncan A.J."/>
            <person name="Brettin T.S."/>
            <person name="Bruce D."/>
            <person name="Chertkov O."/>
            <person name="Detter J.C."/>
            <person name="Han C.S."/>
            <person name="Misra M."/>
            <person name="Richardson P."/>
            <person name="Tapia R."/>
            <person name="Thayer N."/>
            <person name="Xie G."/>
            <person name="Inzana T.J."/>
        </authorList>
    </citation>
    <scope>NUCLEOTIDE SEQUENCE [LARGE SCALE GENOMIC DNA]</scope>
    <source>
        <strain>129Pt</strain>
    </source>
</reference>
<gene>
    <name evidence="1" type="primary">lolD</name>
    <name type="ordered locus">HS_0943</name>
</gene>
<keyword id="KW-0067">ATP-binding</keyword>
<keyword id="KW-0997">Cell inner membrane</keyword>
<keyword id="KW-1003">Cell membrane</keyword>
<keyword id="KW-0472">Membrane</keyword>
<keyword id="KW-0547">Nucleotide-binding</keyword>
<keyword id="KW-1278">Translocase</keyword>
<keyword id="KW-0813">Transport</keyword>
<proteinExistence type="inferred from homology"/>
<accession>Q0I3C2</accession>
<name>LOLD_HISS1</name>
<organism>
    <name type="scientific">Histophilus somni (strain 129Pt)</name>
    <name type="common">Haemophilus somnus</name>
    <dbReference type="NCBI Taxonomy" id="205914"/>
    <lineage>
        <taxon>Bacteria</taxon>
        <taxon>Pseudomonadati</taxon>
        <taxon>Pseudomonadota</taxon>
        <taxon>Gammaproteobacteria</taxon>
        <taxon>Pasteurellales</taxon>
        <taxon>Pasteurellaceae</taxon>
        <taxon>Histophilus</taxon>
    </lineage>
</organism>
<protein>
    <recommendedName>
        <fullName evidence="1">Lipoprotein-releasing system ATP-binding protein LolD</fullName>
        <ecNumber evidence="1">7.6.2.-</ecNumber>
    </recommendedName>
</protein>
<feature type="chain" id="PRO_0000272094" description="Lipoprotein-releasing system ATP-binding protein LolD">
    <location>
        <begin position="1"/>
        <end position="227"/>
    </location>
</feature>
<feature type="domain" description="ABC transporter" evidence="1">
    <location>
        <begin position="5"/>
        <end position="227"/>
    </location>
</feature>
<feature type="binding site" evidence="1">
    <location>
        <begin position="41"/>
        <end position="48"/>
    </location>
    <ligand>
        <name>ATP</name>
        <dbReference type="ChEBI" id="CHEBI:30616"/>
    </ligand>
</feature>
<evidence type="ECO:0000255" key="1">
    <source>
        <dbReference type="HAMAP-Rule" id="MF_01708"/>
    </source>
</evidence>
<comment type="function">
    <text evidence="1">Part of the ABC transporter complex LolCDE involved in the translocation of mature outer membrane-directed lipoproteins, from the inner membrane to the periplasmic chaperone, LolA. Responsible for the formation of the LolA-lipoprotein complex in an ATP-dependent manner.</text>
</comment>
<comment type="subunit">
    <text evidence="1">The complex is composed of two ATP-binding proteins (LolD) and two transmembrane proteins (LolC and LolE).</text>
</comment>
<comment type="subcellular location">
    <subcellularLocation>
        <location evidence="1">Cell inner membrane</location>
        <topology evidence="1">Peripheral membrane protein</topology>
    </subcellularLocation>
</comment>
<comment type="similarity">
    <text evidence="1">Belongs to the ABC transporter superfamily. Lipoprotein translocase (TC 3.A.1.125) family.</text>
</comment>
<dbReference type="EC" id="7.6.2.-" evidence="1"/>
<dbReference type="EMBL" id="CP000436">
    <property type="protein sequence ID" value="ABI25218.1"/>
    <property type="molecule type" value="Genomic_DNA"/>
</dbReference>
<dbReference type="SMR" id="Q0I3C2"/>
<dbReference type="KEGG" id="hso:HS_0943"/>
<dbReference type="eggNOG" id="COG1136">
    <property type="taxonomic scope" value="Bacteria"/>
</dbReference>
<dbReference type="HOGENOM" id="CLU_000604_1_22_6"/>
<dbReference type="GO" id="GO:0005886">
    <property type="term" value="C:plasma membrane"/>
    <property type="evidence" value="ECO:0007669"/>
    <property type="project" value="UniProtKB-SubCell"/>
</dbReference>
<dbReference type="GO" id="GO:0005524">
    <property type="term" value="F:ATP binding"/>
    <property type="evidence" value="ECO:0007669"/>
    <property type="project" value="UniProtKB-KW"/>
</dbReference>
<dbReference type="GO" id="GO:0016887">
    <property type="term" value="F:ATP hydrolysis activity"/>
    <property type="evidence" value="ECO:0007669"/>
    <property type="project" value="InterPro"/>
</dbReference>
<dbReference type="GO" id="GO:0022857">
    <property type="term" value="F:transmembrane transporter activity"/>
    <property type="evidence" value="ECO:0007669"/>
    <property type="project" value="TreeGrafter"/>
</dbReference>
<dbReference type="GO" id="GO:0044874">
    <property type="term" value="P:lipoprotein localization to outer membrane"/>
    <property type="evidence" value="ECO:0007669"/>
    <property type="project" value="TreeGrafter"/>
</dbReference>
<dbReference type="GO" id="GO:0089705">
    <property type="term" value="P:protein localization to outer membrane"/>
    <property type="evidence" value="ECO:0007669"/>
    <property type="project" value="TreeGrafter"/>
</dbReference>
<dbReference type="CDD" id="cd03255">
    <property type="entry name" value="ABC_MJ0796_LolCDE_FtsE"/>
    <property type="match status" value="1"/>
</dbReference>
<dbReference type="FunFam" id="3.40.50.300:FF:000230">
    <property type="entry name" value="Lipoprotein-releasing system ATP-binding protein LolD"/>
    <property type="match status" value="1"/>
</dbReference>
<dbReference type="Gene3D" id="3.40.50.300">
    <property type="entry name" value="P-loop containing nucleotide triphosphate hydrolases"/>
    <property type="match status" value="1"/>
</dbReference>
<dbReference type="InterPro" id="IPR003593">
    <property type="entry name" value="AAA+_ATPase"/>
</dbReference>
<dbReference type="InterPro" id="IPR003439">
    <property type="entry name" value="ABC_transporter-like_ATP-bd"/>
</dbReference>
<dbReference type="InterPro" id="IPR017871">
    <property type="entry name" value="ABC_transporter-like_CS"/>
</dbReference>
<dbReference type="InterPro" id="IPR015854">
    <property type="entry name" value="ABC_transpr_LolD-like"/>
</dbReference>
<dbReference type="InterPro" id="IPR011924">
    <property type="entry name" value="LolD_lipo_ATP-bd"/>
</dbReference>
<dbReference type="InterPro" id="IPR017911">
    <property type="entry name" value="MacB-like_ATP-bd"/>
</dbReference>
<dbReference type="InterPro" id="IPR027417">
    <property type="entry name" value="P-loop_NTPase"/>
</dbReference>
<dbReference type="NCBIfam" id="TIGR02211">
    <property type="entry name" value="LolD_lipo_ex"/>
    <property type="match status" value="1"/>
</dbReference>
<dbReference type="PANTHER" id="PTHR24220">
    <property type="entry name" value="IMPORT ATP-BINDING PROTEIN"/>
    <property type="match status" value="1"/>
</dbReference>
<dbReference type="PANTHER" id="PTHR24220:SF689">
    <property type="entry name" value="LIPOPROTEIN-RELEASING SYSTEM ATP-BINDING PROTEIN LOLD"/>
    <property type="match status" value="1"/>
</dbReference>
<dbReference type="Pfam" id="PF00005">
    <property type="entry name" value="ABC_tran"/>
    <property type="match status" value="1"/>
</dbReference>
<dbReference type="SMART" id="SM00382">
    <property type="entry name" value="AAA"/>
    <property type="match status" value="1"/>
</dbReference>
<dbReference type="SUPFAM" id="SSF52540">
    <property type="entry name" value="P-loop containing nucleoside triphosphate hydrolases"/>
    <property type="match status" value="1"/>
</dbReference>
<dbReference type="PROSITE" id="PS00211">
    <property type="entry name" value="ABC_TRANSPORTER_1"/>
    <property type="match status" value="1"/>
</dbReference>
<dbReference type="PROSITE" id="PS50893">
    <property type="entry name" value="ABC_TRANSPORTER_2"/>
    <property type="match status" value="1"/>
</dbReference>
<dbReference type="PROSITE" id="PS51244">
    <property type="entry name" value="LOLD"/>
    <property type="match status" value="1"/>
</dbReference>